<gene>
    <name evidence="1" type="primary">glmS</name>
    <name type="ordered locus">TK0809</name>
</gene>
<name>GLMS_THEKO</name>
<comment type="function">
    <text evidence="1">Catalyzes the first step in hexosamine metabolism, converting fructose-6P into glucosamine-6P using glutamine as a nitrogen source.</text>
</comment>
<comment type="catalytic activity">
    <reaction evidence="1">
        <text>D-fructose 6-phosphate + L-glutamine = D-glucosamine 6-phosphate + L-glutamate</text>
        <dbReference type="Rhea" id="RHEA:13237"/>
        <dbReference type="ChEBI" id="CHEBI:29985"/>
        <dbReference type="ChEBI" id="CHEBI:58359"/>
        <dbReference type="ChEBI" id="CHEBI:58725"/>
        <dbReference type="ChEBI" id="CHEBI:61527"/>
        <dbReference type="EC" id="2.6.1.16"/>
    </reaction>
</comment>
<comment type="subunit">
    <text evidence="1">Homodimer.</text>
</comment>
<comment type="subcellular location">
    <subcellularLocation>
        <location evidence="1">Cytoplasm</location>
    </subcellularLocation>
</comment>
<proteinExistence type="inferred from homology"/>
<accession>Q5JH71</accession>
<feature type="initiator methionine" description="Removed" evidence="1">
    <location>
        <position position="1"/>
    </location>
</feature>
<feature type="chain" id="PRO_0000135432" description="Glutamine--fructose-6-phosphate aminotransferase [isomerizing]">
    <location>
        <begin position="2"/>
        <end position="602"/>
    </location>
</feature>
<feature type="domain" description="Glutamine amidotransferase type-2" evidence="1">
    <location>
        <begin position="2"/>
        <end position="219"/>
    </location>
</feature>
<feature type="domain" description="SIS 1" evidence="1">
    <location>
        <begin position="280"/>
        <end position="420"/>
    </location>
</feature>
<feature type="domain" description="SIS 2" evidence="1">
    <location>
        <begin position="453"/>
        <end position="592"/>
    </location>
</feature>
<feature type="active site" description="Nucleophile; for GATase activity" evidence="1">
    <location>
        <position position="2"/>
    </location>
</feature>
<feature type="active site" description="For Fru-6P isomerization activity" evidence="1">
    <location>
        <position position="597"/>
    </location>
</feature>
<evidence type="ECO:0000255" key="1">
    <source>
        <dbReference type="HAMAP-Rule" id="MF_00164"/>
    </source>
</evidence>
<organism>
    <name type="scientific">Thermococcus kodakarensis (strain ATCC BAA-918 / JCM 12380 / KOD1)</name>
    <name type="common">Pyrococcus kodakaraensis (strain KOD1)</name>
    <dbReference type="NCBI Taxonomy" id="69014"/>
    <lineage>
        <taxon>Archaea</taxon>
        <taxon>Methanobacteriati</taxon>
        <taxon>Methanobacteriota</taxon>
        <taxon>Thermococci</taxon>
        <taxon>Thermococcales</taxon>
        <taxon>Thermococcaceae</taxon>
        <taxon>Thermococcus</taxon>
    </lineage>
</organism>
<sequence>MCGIIGYIGDRKACEVIVKGLKRLEYRGYDSAGVVTGNGETLDVRKGAGRIDKLTEKLGFLEMEGNRGIGHTRWATHGVPNDINAHPQKDCTGKIVLVHNGIIENFAELKEELLKKGHVFRSDTDTEVIAHLIEEELKGSENFEEALRKALNKLRGSFALAIVYADEPDKLYVVRNESPLVLGIGEGEMFAASDVPAFLEYTNKVIFLDDGEYAILTKDSYVVKRIDTGEVVEKPVHEISWTLEMAEKAGYPHFMLKEIYEQPRAIKDAIHGNREIIRSVAEEIANYDKIIFVAMGTSYHAALVGKSLFQRLAKKVPIVEEASEFRYEFEDLIDDKTLVIAITQSGETADTLAAMKLAKKNGAKVLAVVNVVGSMATRIADLTLYTHAGPEIGVAATKTYTTQLTVLTMLAIELAKVLGTASEDYLEKLEDELMKVPELVELALKHDEALRELAETLKDKRDFFYIGRGISVPTALEGALKLKEISYIHAEGLSAGELKHGPLALLEDGVPVVAINPSGKVFDKMVSNIEEAKARGAMIISLSDREELSRVSDVLVKMPEVDELLSPIVYVVPLQLLAYHLAVLRGNDPDKPRNLAKSVTVE</sequence>
<dbReference type="EC" id="2.6.1.16" evidence="1"/>
<dbReference type="EMBL" id="AP006878">
    <property type="protein sequence ID" value="BAD84998.1"/>
    <property type="molecule type" value="Genomic_DNA"/>
</dbReference>
<dbReference type="RefSeq" id="WP_011249760.1">
    <property type="nucleotide sequence ID" value="NC_006624.1"/>
</dbReference>
<dbReference type="SMR" id="Q5JH71"/>
<dbReference type="STRING" id="69014.TK0809"/>
<dbReference type="EnsemblBacteria" id="BAD84998">
    <property type="protein sequence ID" value="BAD84998"/>
    <property type="gene ID" value="TK0809"/>
</dbReference>
<dbReference type="GeneID" id="78447325"/>
<dbReference type="KEGG" id="tko:TK0809"/>
<dbReference type="PATRIC" id="fig|69014.16.peg.789"/>
<dbReference type="eggNOG" id="arCOG00057">
    <property type="taxonomic scope" value="Archaea"/>
</dbReference>
<dbReference type="HOGENOM" id="CLU_012520_5_2_2"/>
<dbReference type="InParanoid" id="Q5JH71"/>
<dbReference type="OrthoDB" id="372195at2157"/>
<dbReference type="PhylomeDB" id="Q5JH71"/>
<dbReference type="Proteomes" id="UP000000536">
    <property type="component" value="Chromosome"/>
</dbReference>
<dbReference type="GO" id="GO:0005737">
    <property type="term" value="C:cytoplasm"/>
    <property type="evidence" value="ECO:0007669"/>
    <property type="project" value="UniProtKB-SubCell"/>
</dbReference>
<dbReference type="GO" id="GO:0097367">
    <property type="term" value="F:carbohydrate derivative binding"/>
    <property type="evidence" value="ECO:0007669"/>
    <property type="project" value="InterPro"/>
</dbReference>
<dbReference type="GO" id="GO:0004360">
    <property type="term" value="F:glutamine-fructose-6-phosphate transaminase (isomerizing) activity"/>
    <property type="evidence" value="ECO:0000318"/>
    <property type="project" value="GO_Central"/>
</dbReference>
<dbReference type="GO" id="GO:0005975">
    <property type="term" value="P:carbohydrate metabolic process"/>
    <property type="evidence" value="ECO:0007669"/>
    <property type="project" value="UniProtKB-UniRule"/>
</dbReference>
<dbReference type="GO" id="GO:0006002">
    <property type="term" value="P:fructose 6-phosphate metabolic process"/>
    <property type="evidence" value="ECO:0000318"/>
    <property type="project" value="GO_Central"/>
</dbReference>
<dbReference type="GO" id="GO:0006487">
    <property type="term" value="P:protein N-linked glycosylation"/>
    <property type="evidence" value="ECO:0000318"/>
    <property type="project" value="GO_Central"/>
</dbReference>
<dbReference type="GO" id="GO:0006047">
    <property type="term" value="P:UDP-N-acetylglucosamine metabolic process"/>
    <property type="evidence" value="ECO:0000318"/>
    <property type="project" value="GO_Central"/>
</dbReference>
<dbReference type="CDD" id="cd00714">
    <property type="entry name" value="GFAT"/>
    <property type="match status" value="1"/>
</dbReference>
<dbReference type="CDD" id="cd05008">
    <property type="entry name" value="SIS_GlmS_GlmD_1"/>
    <property type="match status" value="1"/>
</dbReference>
<dbReference type="CDD" id="cd05009">
    <property type="entry name" value="SIS_GlmS_GlmD_2"/>
    <property type="match status" value="1"/>
</dbReference>
<dbReference type="FunFam" id="3.40.50.10490:FF:000001">
    <property type="entry name" value="Glutamine--fructose-6-phosphate aminotransferase [isomerizing]"/>
    <property type="match status" value="1"/>
</dbReference>
<dbReference type="FunFam" id="3.40.50.10490:FF:000002">
    <property type="entry name" value="Glutamine--fructose-6-phosphate aminotransferase [isomerizing]"/>
    <property type="match status" value="1"/>
</dbReference>
<dbReference type="FunFam" id="3.60.20.10:FF:000006">
    <property type="entry name" value="Glutamine--fructose-6-phosphate aminotransferase [isomerizing]"/>
    <property type="match status" value="1"/>
</dbReference>
<dbReference type="Gene3D" id="3.40.50.10490">
    <property type="entry name" value="Glucose-6-phosphate isomerase like protein, domain 1"/>
    <property type="match status" value="2"/>
</dbReference>
<dbReference type="Gene3D" id="3.60.20.10">
    <property type="entry name" value="Glutamine Phosphoribosylpyrophosphate, subunit 1, domain 1"/>
    <property type="match status" value="1"/>
</dbReference>
<dbReference type="HAMAP" id="MF_00164">
    <property type="entry name" value="GlmS"/>
    <property type="match status" value="1"/>
</dbReference>
<dbReference type="InterPro" id="IPR017932">
    <property type="entry name" value="GATase_2_dom"/>
</dbReference>
<dbReference type="InterPro" id="IPR005855">
    <property type="entry name" value="GFAT"/>
</dbReference>
<dbReference type="InterPro" id="IPR047084">
    <property type="entry name" value="GFAT_N"/>
</dbReference>
<dbReference type="InterPro" id="IPR035466">
    <property type="entry name" value="GlmS/AgaS_SIS"/>
</dbReference>
<dbReference type="InterPro" id="IPR035490">
    <property type="entry name" value="GlmS/FrlB_SIS"/>
</dbReference>
<dbReference type="InterPro" id="IPR029055">
    <property type="entry name" value="Ntn_hydrolases_N"/>
</dbReference>
<dbReference type="InterPro" id="IPR001347">
    <property type="entry name" value="SIS_dom"/>
</dbReference>
<dbReference type="InterPro" id="IPR046348">
    <property type="entry name" value="SIS_dom_sf"/>
</dbReference>
<dbReference type="NCBIfam" id="TIGR01135">
    <property type="entry name" value="glmS"/>
    <property type="match status" value="1"/>
</dbReference>
<dbReference type="NCBIfam" id="NF001484">
    <property type="entry name" value="PRK00331.1"/>
    <property type="match status" value="1"/>
</dbReference>
<dbReference type="PANTHER" id="PTHR10937">
    <property type="entry name" value="GLUCOSAMINE--FRUCTOSE-6-PHOSPHATE AMINOTRANSFERASE, ISOMERIZING"/>
    <property type="match status" value="1"/>
</dbReference>
<dbReference type="PANTHER" id="PTHR10937:SF0">
    <property type="entry name" value="GLUTAMINE--FRUCTOSE-6-PHOSPHATE TRANSAMINASE (ISOMERIZING)"/>
    <property type="match status" value="1"/>
</dbReference>
<dbReference type="Pfam" id="PF13522">
    <property type="entry name" value="GATase_6"/>
    <property type="match status" value="1"/>
</dbReference>
<dbReference type="Pfam" id="PF01380">
    <property type="entry name" value="SIS"/>
    <property type="match status" value="2"/>
</dbReference>
<dbReference type="SUPFAM" id="SSF56235">
    <property type="entry name" value="N-terminal nucleophile aminohydrolases (Ntn hydrolases)"/>
    <property type="match status" value="1"/>
</dbReference>
<dbReference type="SUPFAM" id="SSF53697">
    <property type="entry name" value="SIS domain"/>
    <property type="match status" value="1"/>
</dbReference>
<dbReference type="PROSITE" id="PS51278">
    <property type="entry name" value="GATASE_TYPE_2"/>
    <property type="match status" value="1"/>
</dbReference>
<dbReference type="PROSITE" id="PS51464">
    <property type="entry name" value="SIS"/>
    <property type="match status" value="2"/>
</dbReference>
<keyword id="KW-0032">Aminotransferase</keyword>
<keyword id="KW-0963">Cytoplasm</keyword>
<keyword id="KW-0315">Glutamine amidotransferase</keyword>
<keyword id="KW-1185">Reference proteome</keyword>
<keyword id="KW-0677">Repeat</keyword>
<keyword id="KW-0808">Transferase</keyword>
<reference key="1">
    <citation type="journal article" date="2005" name="Genome Res.">
        <title>Complete genome sequence of the hyperthermophilic archaeon Thermococcus kodakaraensis KOD1 and comparison with Pyrococcus genomes.</title>
        <authorList>
            <person name="Fukui T."/>
            <person name="Atomi H."/>
            <person name="Kanai T."/>
            <person name="Matsumi R."/>
            <person name="Fujiwara S."/>
            <person name="Imanaka T."/>
        </authorList>
    </citation>
    <scope>NUCLEOTIDE SEQUENCE [LARGE SCALE GENOMIC DNA]</scope>
    <source>
        <strain>ATCC BAA-918 / JCM 12380 / KOD1</strain>
    </source>
</reference>
<protein>
    <recommendedName>
        <fullName evidence="1">Glutamine--fructose-6-phosphate aminotransferase [isomerizing]</fullName>
        <ecNumber evidence="1">2.6.1.16</ecNumber>
    </recommendedName>
    <alternativeName>
        <fullName evidence="1">D-fructose-6-phosphate amidotransferase</fullName>
    </alternativeName>
    <alternativeName>
        <fullName evidence="1">GFAT</fullName>
    </alternativeName>
    <alternativeName>
        <fullName evidence="1">Glucosamine-6-phosphate synthase</fullName>
    </alternativeName>
    <alternativeName>
        <fullName evidence="1">Hexosephosphate aminotransferase</fullName>
    </alternativeName>
    <alternativeName>
        <fullName evidence="1">L-glutamine--D-fructose-6-phosphate amidotransferase</fullName>
    </alternativeName>
</protein>